<geneLocation type="chloroplast"/>
<dbReference type="EMBL" id="EU117376">
    <property type="protein sequence ID" value="ABV66210.1"/>
    <property type="molecule type" value="Genomic_DNA"/>
</dbReference>
<dbReference type="RefSeq" id="YP_001718493.1">
    <property type="nucleotide sequence ID" value="NC_010433.1"/>
</dbReference>
<dbReference type="SMR" id="B1NWK6"/>
<dbReference type="GeneID" id="6000001"/>
<dbReference type="KEGG" id="mesc:6000001"/>
<dbReference type="OrthoDB" id="441444at2759"/>
<dbReference type="GO" id="GO:0009507">
    <property type="term" value="C:chloroplast"/>
    <property type="evidence" value="ECO:0007669"/>
    <property type="project" value="UniProtKB-SubCell"/>
</dbReference>
<dbReference type="GO" id="GO:1990904">
    <property type="term" value="C:ribonucleoprotein complex"/>
    <property type="evidence" value="ECO:0007669"/>
    <property type="project" value="UniProtKB-KW"/>
</dbReference>
<dbReference type="GO" id="GO:0005840">
    <property type="term" value="C:ribosome"/>
    <property type="evidence" value="ECO:0007669"/>
    <property type="project" value="UniProtKB-KW"/>
</dbReference>
<dbReference type="GO" id="GO:0003735">
    <property type="term" value="F:structural constituent of ribosome"/>
    <property type="evidence" value="ECO:0007669"/>
    <property type="project" value="InterPro"/>
</dbReference>
<dbReference type="GO" id="GO:0006412">
    <property type="term" value="P:translation"/>
    <property type="evidence" value="ECO:0007669"/>
    <property type="project" value="UniProtKB-UniRule"/>
</dbReference>
<dbReference type="CDD" id="cd00677">
    <property type="entry name" value="S15_NS1_EPRS_RNA-bind"/>
    <property type="match status" value="1"/>
</dbReference>
<dbReference type="Gene3D" id="1.10.287.10">
    <property type="entry name" value="S15/NS1, RNA-binding"/>
    <property type="match status" value="1"/>
</dbReference>
<dbReference type="HAMAP" id="MF_01343_B">
    <property type="entry name" value="Ribosomal_uS15_B"/>
    <property type="match status" value="1"/>
</dbReference>
<dbReference type="InterPro" id="IPR000589">
    <property type="entry name" value="Ribosomal_uS15"/>
</dbReference>
<dbReference type="InterPro" id="IPR005290">
    <property type="entry name" value="Ribosomal_uS15_bac-type"/>
</dbReference>
<dbReference type="InterPro" id="IPR009068">
    <property type="entry name" value="uS15_NS1_RNA-bd_sf"/>
</dbReference>
<dbReference type="NCBIfam" id="TIGR00952">
    <property type="entry name" value="S15_bact"/>
    <property type="match status" value="1"/>
</dbReference>
<dbReference type="PANTHER" id="PTHR23321">
    <property type="entry name" value="RIBOSOMAL PROTEIN S15, BACTERIAL AND ORGANELLAR"/>
    <property type="match status" value="1"/>
</dbReference>
<dbReference type="PANTHER" id="PTHR23321:SF26">
    <property type="entry name" value="SMALL RIBOSOMAL SUBUNIT PROTEIN US15M"/>
    <property type="match status" value="1"/>
</dbReference>
<dbReference type="Pfam" id="PF00312">
    <property type="entry name" value="Ribosomal_S15"/>
    <property type="match status" value="1"/>
</dbReference>
<dbReference type="SMART" id="SM01387">
    <property type="entry name" value="Ribosomal_S15"/>
    <property type="match status" value="1"/>
</dbReference>
<dbReference type="SUPFAM" id="SSF47060">
    <property type="entry name" value="S15/NS1 RNA-binding domain"/>
    <property type="match status" value="1"/>
</dbReference>
<dbReference type="PROSITE" id="PS00362">
    <property type="entry name" value="RIBOSOMAL_S15"/>
    <property type="match status" value="1"/>
</dbReference>
<feature type="chain" id="PRO_0000354267" description="Small ribosomal subunit protein uS15c">
    <location>
        <begin position="1"/>
        <end position="90"/>
    </location>
</feature>
<sequence length="90" mass="10840">MVKNSFISVISQEEKDENKGSVEFQIVSFTNKIRRLTSHFELHRKDYLSQRGLRKILGKRQRLLSYLAKKNRVRYKELISRLDIRESKTR</sequence>
<accession>B1NWK6</accession>
<keyword id="KW-0150">Chloroplast</keyword>
<keyword id="KW-0934">Plastid</keyword>
<keyword id="KW-0687">Ribonucleoprotein</keyword>
<keyword id="KW-0689">Ribosomal protein</keyword>
<organism>
    <name type="scientific">Manihot esculenta</name>
    <name type="common">Cassava</name>
    <name type="synonym">Jatropha manihot</name>
    <dbReference type="NCBI Taxonomy" id="3983"/>
    <lineage>
        <taxon>Eukaryota</taxon>
        <taxon>Viridiplantae</taxon>
        <taxon>Streptophyta</taxon>
        <taxon>Embryophyta</taxon>
        <taxon>Tracheophyta</taxon>
        <taxon>Spermatophyta</taxon>
        <taxon>Magnoliopsida</taxon>
        <taxon>eudicotyledons</taxon>
        <taxon>Gunneridae</taxon>
        <taxon>Pentapetalae</taxon>
        <taxon>rosids</taxon>
        <taxon>fabids</taxon>
        <taxon>Malpighiales</taxon>
        <taxon>Euphorbiaceae</taxon>
        <taxon>Crotonoideae</taxon>
        <taxon>Manihoteae</taxon>
        <taxon>Manihot</taxon>
    </lineage>
</organism>
<comment type="subunit">
    <text evidence="1">Part of the 30S ribosomal subunit.</text>
</comment>
<comment type="subcellular location">
    <subcellularLocation>
        <location>Plastid</location>
        <location>Chloroplast</location>
    </subcellularLocation>
</comment>
<comment type="similarity">
    <text evidence="2">Belongs to the universal ribosomal protein uS15 family.</text>
</comment>
<proteinExistence type="inferred from homology"/>
<gene>
    <name type="primary">rps15</name>
</gene>
<evidence type="ECO:0000250" key="1"/>
<evidence type="ECO:0000305" key="2"/>
<reference key="1">
    <citation type="journal article" date="2008" name="Theor. Appl. Genet.">
        <title>The complete nucleotide sequence of the cassava (Manihot esculenta) chloroplast genome and the evolution of atpF in Malpighiales: RNA editing and multiple losses of a group II intron.</title>
        <authorList>
            <person name="Daniell H."/>
            <person name="Wurdack K.J."/>
            <person name="Kanagaraj A."/>
            <person name="Lee S.-B."/>
            <person name="Saski C."/>
            <person name="Jansen R.K."/>
        </authorList>
    </citation>
    <scope>NUCLEOTIDE SEQUENCE [LARGE SCALE GENOMIC DNA]</scope>
    <source>
        <strain>cv. TME3</strain>
    </source>
</reference>
<protein>
    <recommendedName>
        <fullName evidence="2">Small ribosomal subunit protein uS15c</fullName>
    </recommendedName>
    <alternativeName>
        <fullName>30S ribosomal protein S15, chloroplastic</fullName>
    </alternativeName>
</protein>
<name>RR15_MANES</name>